<dbReference type="EMBL" id="AE017220">
    <property type="protein sequence ID" value="AAX65186.1"/>
    <property type="molecule type" value="Genomic_DNA"/>
</dbReference>
<dbReference type="RefSeq" id="WP_000457190.1">
    <property type="nucleotide sequence ID" value="NC_006905.1"/>
</dbReference>
<dbReference type="KEGG" id="sec:SCH_1280"/>
<dbReference type="HOGENOM" id="CLU_079569_3_1_6"/>
<dbReference type="Proteomes" id="UP000000538">
    <property type="component" value="Chromosome"/>
</dbReference>
<dbReference type="GO" id="GO:0005886">
    <property type="term" value="C:plasma membrane"/>
    <property type="evidence" value="ECO:0007669"/>
    <property type="project" value="UniProtKB-SubCell"/>
</dbReference>
<dbReference type="GO" id="GO:0015297">
    <property type="term" value="F:antiporter activity"/>
    <property type="evidence" value="ECO:0007669"/>
    <property type="project" value="UniProtKB-KW"/>
</dbReference>
<dbReference type="GO" id="GO:0015190">
    <property type="term" value="F:L-leucine transmembrane transporter activity"/>
    <property type="evidence" value="ECO:0007669"/>
    <property type="project" value="TreeGrafter"/>
</dbReference>
<dbReference type="GO" id="GO:0015820">
    <property type="term" value="P:L-leucine transport"/>
    <property type="evidence" value="ECO:0007669"/>
    <property type="project" value="TreeGrafter"/>
</dbReference>
<dbReference type="InterPro" id="IPR001123">
    <property type="entry name" value="LeuE-type"/>
</dbReference>
<dbReference type="NCBIfam" id="NF008201">
    <property type="entry name" value="PRK10958.1"/>
    <property type="match status" value="1"/>
</dbReference>
<dbReference type="PANTHER" id="PTHR30086">
    <property type="entry name" value="ARGININE EXPORTER PROTEIN ARGO"/>
    <property type="match status" value="1"/>
</dbReference>
<dbReference type="PANTHER" id="PTHR30086:SF15">
    <property type="entry name" value="LEUCINE EFFLUX PROTEIN"/>
    <property type="match status" value="1"/>
</dbReference>
<dbReference type="Pfam" id="PF01810">
    <property type="entry name" value="LysE"/>
    <property type="match status" value="1"/>
</dbReference>
<dbReference type="PIRSF" id="PIRSF006324">
    <property type="entry name" value="LeuE"/>
    <property type="match status" value="1"/>
</dbReference>
<name>LEUE_SALCH</name>
<reference key="1">
    <citation type="journal article" date="2005" name="Nucleic Acids Res.">
        <title>The genome sequence of Salmonella enterica serovar Choleraesuis, a highly invasive and resistant zoonotic pathogen.</title>
        <authorList>
            <person name="Chiu C.-H."/>
            <person name="Tang P."/>
            <person name="Chu C."/>
            <person name="Hu S."/>
            <person name="Bao Q."/>
            <person name="Yu J."/>
            <person name="Chou Y.-Y."/>
            <person name="Wang H.-S."/>
            <person name="Lee Y.-S."/>
        </authorList>
    </citation>
    <scope>NUCLEOTIDE SEQUENCE [LARGE SCALE GENOMIC DNA]</scope>
    <source>
        <strain>SC-B67</strain>
    </source>
</reference>
<evidence type="ECO:0000250" key="1">
    <source>
        <dbReference type="UniProtKB" id="P76249"/>
    </source>
</evidence>
<evidence type="ECO:0000255" key="2"/>
<evidence type="ECO:0000305" key="3"/>
<organism>
    <name type="scientific">Salmonella choleraesuis (strain SC-B67)</name>
    <dbReference type="NCBI Taxonomy" id="321314"/>
    <lineage>
        <taxon>Bacteria</taxon>
        <taxon>Pseudomonadati</taxon>
        <taxon>Pseudomonadota</taxon>
        <taxon>Gammaproteobacteria</taxon>
        <taxon>Enterobacterales</taxon>
        <taxon>Enterobacteriaceae</taxon>
        <taxon>Salmonella</taxon>
    </lineage>
</organism>
<protein>
    <recommendedName>
        <fullName evidence="1">Leucine efflux protein</fullName>
    </recommendedName>
</protein>
<proteinExistence type="inferred from homology"/>
<keyword id="KW-0029">Amino-acid transport</keyword>
<keyword id="KW-0050">Antiport</keyword>
<keyword id="KW-0997">Cell inner membrane</keyword>
<keyword id="KW-1003">Cell membrane</keyword>
<keyword id="KW-0472">Membrane</keyword>
<keyword id="KW-0812">Transmembrane</keyword>
<keyword id="KW-1133">Transmembrane helix</keyword>
<keyword id="KW-0813">Transport</keyword>
<sequence length="212" mass="22946">MFAEYGVLNYWTYLVGAIFIVLVPGPNTLFVLKNSVGRGVKGGYLAACGVFIGDAILMFLAYAGVATLIKTTPVLFNIVRYLGAFYLLYLGAKILYATLTSKGRAATETVVPFGAIFKRALILSLTNPKAILFYVSFFVQFIDVTAPHTGVSFFILATTLEIVSFCYLSFLILSGAFVTHYIGTKKKLAKVGNSLIGLLFVGFAARLATLQS</sequence>
<feature type="chain" id="PRO_0000316806" description="Leucine efflux protein">
    <location>
        <begin position="1"/>
        <end position="212"/>
    </location>
</feature>
<feature type="transmembrane region" description="Helical" evidence="2">
    <location>
        <begin position="12"/>
        <end position="32"/>
    </location>
</feature>
<feature type="transmembrane region" description="Helical" evidence="2">
    <location>
        <begin position="49"/>
        <end position="69"/>
    </location>
</feature>
<feature type="transmembrane region" description="Helical" evidence="2">
    <location>
        <begin position="81"/>
        <end position="101"/>
    </location>
</feature>
<feature type="transmembrane region" description="Helical" evidence="2">
    <location>
        <begin position="120"/>
        <end position="142"/>
    </location>
</feature>
<feature type="transmembrane region" description="Helical" evidence="2">
    <location>
        <begin position="153"/>
        <end position="173"/>
    </location>
</feature>
<feature type="transmembrane region" description="Helical" evidence="2">
    <location>
        <begin position="188"/>
        <end position="208"/>
    </location>
</feature>
<accession>Q57Q25</accession>
<comment type="function">
    <text evidence="1">Exporter of leucine.</text>
</comment>
<comment type="catalytic activity">
    <reaction evidence="1">
        <text>L-leucine(in) + H(+)(out) = L-leucine(out) + H(+)(in)</text>
        <dbReference type="Rhea" id="RHEA:28731"/>
        <dbReference type="ChEBI" id="CHEBI:15378"/>
        <dbReference type="ChEBI" id="CHEBI:57427"/>
    </reaction>
    <physiologicalReaction direction="left-to-right" evidence="1">
        <dbReference type="Rhea" id="RHEA:28732"/>
    </physiologicalReaction>
</comment>
<comment type="subcellular location">
    <subcellularLocation>
        <location evidence="1">Cell inner membrane</location>
        <topology evidence="2">Multi-pass membrane protein</topology>
    </subcellularLocation>
</comment>
<comment type="similarity">
    <text evidence="3">Belongs to the Rht family.</text>
</comment>
<gene>
    <name type="primary">leuE</name>
    <name type="ordered locus">SCH_1280</name>
</gene>